<feature type="chain" id="PRO_0000410169" description="Nucleolar protein 16">
    <location>
        <begin position="1"/>
        <end position="213"/>
    </location>
</feature>
<feature type="region of interest" description="Disordered" evidence="2">
    <location>
        <begin position="1"/>
        <end position="42"/>
    </location>
</feature>
<feature type="compositionally biased region" description="Basic residues" evidence="2">
    <location>
        <begin position="1"/>
        <end position="14"/>
    </location>
</feature>
<feature type="compositionally biased region" description="Basic residues" evidence="2">
    <location>
        <begin position="22"/>
        <end position="34"/>
    </location>
</feature>
<comment type="function">
    <text evidence="1">Involved in the biogenesis of the 60S ribosomal subunit.</text>
</comment>
<comment type="subunit">
    <text evidence="1">Component of the pre-66S ribosomal particle.</text>
</comment>
<comment type="subcellular location">
    <subcellularLocation>
        <location evidence="1">Nucleus</location>
        <location evidence="1">Nucleolus</location>
    </subcellularLocation>
</comment>
<comment type="similarity">
    <text evidence="3">Belongs to the NOP16 family.</text>
</comment>
<protein>
    <recommendedName>
        <fullName>Nucleolar protein 16</fullName>
    </recommendedName>
</protein>
<organism>
    <name type="scientific">Cryptococcus neoformans var. neoformans serotype D (strain B-3501A)</name>
    <name type="common">Filobasidiella neoformans</name>
    <dbReference type="NCBI Taxonomy" id="283643"/>
    <lineage>
        <taxon>Eukaryota</taxon>
        <taxon>Fungi</taxon>
        <taxon>Dikarya</taxon>
        <taxon>Basidiomycota</taxon>
        <taxon>Agaricomycotina</taxon>
        <taxon>Tremellomycetes</taxon>
        <taxon>Tremellales</taxon>
        <taxon>Cryptococcaceae</taxon>
        <taxon>Cryptococcus</taxon>
        <taxon>Cryptococcus neoformans species complex</taxon>
    </lineage>
</organism>
<gene>
    <name type="primary">NOP16</name>
    <name type="ordered locus">CNBC6990</name>
</gene>
<sequence>MANPRQRNKAKSSRTQKPSLNAKRRMHQKLRKAPPLKGPEVLQEKWDKKKTVFQNYAALGLLPSIPVSKGASTSRSQRVKLPEVPAEAEAQNVKVGFGRIIRDEEGNVIDIIIDEDEEKQEEEQIEVDEEKELEPVEAKTEVVKRLEELAASAAPVKRHSSMSERTWLQQLVDKYGDDTERMARDRKLNVWQKTEGEIKRMIKKAGGVQMLRK</sequence>
<evidence type="ECO:0000250" key="1"/>
<evidence type="ECO:0000256" key="2">
    <source>
        <dbReference type="SAM" id="MobiDB-lite"/>
    </source>
</evidence>
<evidence type="ECO:0000305" key="3"/>
<proteinExistence type="inferred from homology"/>
<keyword id="KW-0539">Nucleus</keyword>
<keyword id="KW-0687">Ribonucleoprotein</keyword>
<keyword id="KW-0690">Ribosome biogenesis</keyword>
<keyword id="KW-0698">rRNA processing</keyword>
<dbReference type="EMBL" id="AAEY01000017">
    <property type="protein sequence ID" value="EAL21663.1"/>
    <property type="molecule type" value="Genomic_DNA"/>
</dbReference>
<dbReference type="RefSeq" id="XP_776310.1">
    <property type="nucleotide sequence ID" value="XM_771217.1"/>
</dbReference>
<dbReference type="SMR" id="P0CP25"/>
<dbReference type="EnsemblFungi" id="AAW42089">
    <property type="protein sequence ID" value="AAW42089"/>
    <property type="gene ID" value="CNC00240"/>
</dbReference>
<dbReference type="GeneID" id="4935367"/>
<dbReference type="KEGG" id="cnb:CNBC6990"/>
<dbReference type="VEuPathDB" id="FungiDB:CNBC6990"/>
<dbReference type="HOGENOM" id="CLU_078857_0_0_1"/>
<dbReference type="OrthoDB" id="7013at5206"/>
<dbReference type="GO" id="GO:0005730">
    <property type="term" value="C:nucleolus"/>
    <property type="evidence" value="ECO:0007669"/>
    <property type="project" value="UniProtKB-SubCell"/>
</dbReference>
<dbReference type="GO" id="GO:1990904">
    <property type="term" value="C:ribonucleoprotein complex"/>
    <property type="evidence" value="ECO:0007669"/>
    <property type="project" value="UniProtKB-KW"/>
</dbReference>
<dbReference type="GO" id="GO:0042273">
    <property type="term" value="P:ribosomal large subunit biogenesis"/>
    <property type="evidence" value="ECO:0007669"/>
    <property type="project" value="TreeGrafter"/>
</dbReference>
<dbReference type="GO" id="GO:0006364">
    <property type="term" value="P:rRNA processing"/>
    <property type="evidence" value="ECO:0007669"/>
    <property type="project" value="UniProtKB-KW"/>
</dbReference>
<dbReference type="InterPro" id="IPR019002">
    <property type="entry name" value="Ribosome_biogenesis_Nop16"/>
</dbReference>
<dbReference type="PANTHER" id="PTHR13243">
    <property type="entry name" value="HSPC111 PROTEIN-RELATED"/>
    <property type="match status" value="1"/>
</dbReference>
<dbReference type="PANTHER" id="PTHR13243:SF1">
    <property type="entry name" value="NUCLEOLAR PROTEIN 16"/>
    <property type="match status" value="1"/>
</dbReference>
<dbReference type="Pfam" id="PF09420">
    <property type="entry name" value="Nop16"/>
    <property type="match status" value="1"/>
</dbReference>
<accession>P0CP25</accession>
<accession>Q55UY2</accession>
<accession>Q5KL99</accession>
<name>NOP16_CRYNB</name>
<reference key="1">
    <citation type="journal article" date="2005" name="Science">
        <title>The genome of the basidiomycetous yeast and human pathogen Cryptococcus neoformans.</title>
        <authorList>
            <person name="Loftus B.J."/>
            <person name="Fung E."/>
            <person name="Roncaglia P."/>
            <person name="Rowley D."/>
            <person name="Amedeo P."/>
            <person name="Bruno D."/>
            <person name="Vamathevan J."/>
            <person name="Miranda M."/>
            <person name="Anderson I.J."/>
            <person name="Fraser J.A."/>
            <person name="Allen J.E."/>
            <person name="Bosdet I.E."/>
            <person name="Brent M.R."/>
            <person name="Chiu R."/>
            <person name="Doering T.L."/>
            <person name="Donlin M.J."/>
            <person name="D'Souza C.A."/>
            <person name="Fox D.S."/>
            <person name="Grinberg V."/>
            <person name="Fu J."/>
            <person name="Fukushima M."/>
            <person name="Haas B.J."/>
            <person name="Huang J.C."/>
            <person name="Janbon G."/>
            <person name="Jones S.J.M."/>
            <person name="Koo H.L."/>
            <person name="Krzywinski M.I."/>
            <person name="Kwon-Chung K.J."/>
            <person name="Lengeler K.B."/>
            <person name="Maiti R."/>
            <person name="Marra M.A."/>
            <person name="Marra R.E."/>
            <person name="Mathewson C.A."/>
            <person name="Mitchell T.G."/>
            <person name="Pertea M."/>
            <person name="Riggs F.R."/>
            <person name="Salzberg S.L."/>
            <person name="Schein J.E."/>
            <person name="Shvartsbeyn A."/>
            <person name="Shin H."/>
            <person name="Shumway M."/>
            <person name="Specht C.A."/>
            <person name="Suh B.B."/>
            <person name="Tenney A."/>
            <person name="Utterback T.R."/>
            <person name="Wickes B.L."/>
            <person name="Wortman J.R."/>
            <person name="Wye N.H."/>
            <person name="Kronstad J.W."/>
            <person name="Lodge J.K."/>
            <person name="Heitman J."/>
            <person name="Davis R.W."/>
            <person name="Fraser C.M."/>
            <person name="Hyman R.W."/>
        </authorList>
    </citation>
    <scope>NUCLEOTIDE SEQUENCE [LARGE SCALE GENOMIC DNA]</scope>
    <source>
        <strain>B-3501A</strain>
    </source>
</reference>